<gene>
    <name evidence="1" type="primary">purH</name>
    <name type="ordered locus">Tery_1128</name>
</gene>
<organism>
    <name type="scientific">Trichodesmium erythraeum (strain IMS101)</name>
    <dbReference type="NCBI Taxonomy" id="203124"/>
    <lineage>
        <taxon>Bacteria</taxon>
        <taxon>Bacillati</taxon>
        <taxon>Cyanobacteriota</taxon>
        <taxon>Cyanophyceae</taxon>
        <taxon>Oscillatoriophycideae</taxon>
        <taxon>Oscillatoriales</taxon>
        <taxon>Microcoleaceae</taxon>
        <taxon>Trichodesmium</taxon>
    </lineage>
</organism>
<evidence type="ECO:0000255" key="1">
    <source>
        <dbReference type="HAMAP-Rule" id="MF_00139"/>
    </source>
</evidence>
<evidence type="ECO:0000255" key="2">
    <source>
        <dbReference type="PROSITE-ProRule" id="PRU01202"/>
    </source>
</evidence>
<reference key="1">
    <citation type="journal article" date="2015" name="Proc. Natl. Acad. Sci. U.S.A.">
        <title>Trichodesmium genome maintains abundant, widespread noncoding DNA in situ, despite oligotrophic lifestyle.</title>
        <authorList>
            <person name="Walworth N."/>
            <person name="Pfreundt U."/>
            <person name="Nelson W.C."/>
            <person name="Mincer T."/>
            <person name="Heidelberg J.F."/>
            <person name="Fu F."/>
            <person name="Waterbury J.B."/>
            <person name="Glavina del Rio T."/>
            <person name="Goodwin L."/>
            <person name="Kyrpides N.C."/>
            <person name="Land M.L."/>
            <person name="Woyke T."/>
            <person name="Hutchins D.A."/>
            <person name="Hess W.R."/>
            <person name="Webb E.A."/>
        </authorList>
    </citation>
    <scope>NUCLEOTIDE SEQUENCE [LARGE SCALE GENOMIC DNA]</scope>
    <source>
        <strain>IMS101</strain>
    </source>
</reference>
<proteinExistence type="inferred from homology"/>
<name>PUR9_TRIEI</name>
<comment type="catalytic activity">
    <reaction evidence="1">
        <text>(6R)-10-formyltetrahydrofolate + 5-amino-1-(5-phospho-beta-D-ribosyl)imidazole-4-carboxamide = 5-formamido-1-(5-phospho-D-ribosyl)imidazole-4-carboxamide + (6S)-5,6,7,8-tetrahydrofolate</text>
        <dbReference type="Rhea" id="RHEA:22192"/>
        <dbReference type="ChEBI" id="CHEBI:57453"/>
        <dbReference type="ChEBI" id="CHEBI:58467"/>
        <dbReference type="ChEBI" id="CHEBI:58475"/>
        <dbReference type="ChEBI" id="CHEBI:195366"/>
        <dbReference type="EC" id="2.1.2.3"/>
    </reaction>
</comment>
<comment type="catalytic activity">
    <reaction evidence="1">
        <text>IMP + H2O = 5-formamido-1-(5-phospho-D-ribosyl)imidazole-4-carboxamide</text>
        <dbReference type="Rhea" id="RHEA:18445"/>
        <dbReference type="ChEBI" id="CHEBI:15377"/>
        <dbReference type="ChEBI" id="CHEBI:58053"/>
        <dbReference type="ChEBI" id="CHEBI:58467"/>
        <dbReference type="EC" id="3.5.4.10"/>
    </reaction>
</comment>
<comment type="pathway">
    <text evidence="1">Purine metabolism; IMP biosynthesis via de novo pathway; 5-formamido-1-(5-phospho-D-ribosyl)imidazole-4-carboxamide from 5-amino-1-(5-phospho-D-ribosyl)imidazole-4-carboxamide (10-formyl THF route): step 1/1.</text>
</comment>
<comment type="pathway">
    <text evidence="1">Purine metabolism; IMP biosynthesis via de novo pathway; IMP from 5-formamido-1-(5-phospho-D-ribosyl)imidazole-4-carboxamide: step 1/1.</text>
</comment>
<comment type="domain">
    <text evidence="1">The IMP cyclohydrolase activity resides in the N-terminal region.</text>
</comment>
<comment type="similarity">
    <text evidence="1">Belongs to the PurH family.</text>
</comment>
<feature type="chain" id="PRO_1000018984" description="Bifunctional purine biosynthesis protein PurH">
    <location>
        <begin position="1"/>
        <end position="517"/>
    </location>
</feature>
<feature type="domain" description="MGS-like" evidence="2">
    <location>
        <begin position="1"/>
        <end position="146"/>
    </location>
</feature>
<protein>
    <recommendedName>
        <fullName evidence="1">Bifunctional purine biosynthesis protein PurH</fullName>
    </recommendedName>
    <domain>
        <recommendedName>
            <fullName evidence="1">Phosphoribosylaminoimidazolecarboxamide formyltransferase</fullName>
            <ecNumber evidence="1">2.1.2.3</ecNumber>
        </recommendedName>
        <alternativeName>
            <fullName evidence="1">AICAR transformylase</fullName>
        </alternativeName>
    </domain>
    <domain>
        <recommendedName>
            <fullName evidence="1">IMP cyclohydrolase</fullName>
            <ecNumber evidence="1">3.5.4.10</ecNumber>
        </recommendedName>
        <alternativeName>
            <fullName evidence="1">ATIC</fullName>
        </alternativeName>
        <alternativeName>
            <fullName evidence="1">IMP synthase</fullName>
        </alternativeName>
        <alternativeName>
            <fullName evidence="1">Inosinicase</fullName>
        </alternativeName>
    </domain>
</protein>
<sequence>MKRLALLSTSDKTGLIDLAKSLVTEFDYEIISSGGTAKTLKDAGIYVTKVSDYTGFPEILGGRVKTLHPRIHGGILARKDLPQDVEELNANNIRPIDLVVVNLYPFEETISKPEVTLAEAIEKIDIGGPAMLRASAKNFAHLTVLCNHFQYNSYLEELRKNAGEVSLEFRQKCALAGFKHTATYDQAIATYLQEQQTTSESEKSEKEIFFLSGKKIKTLRYGENPHQYATWYQRGINASGWGASKIIQGKELSYNNLVDLEAARRIIIEFSDAPTVAILKHTNPCGVAVDETILAAYERAFAGDSVSAFGGIVALNKSIDAATAKAMTKTFLECVVAPGCEPEAEKIFKSKSKLRVLISPYFKQSEPETIKVISGGFLVQDTDDTIDNYSDWKIVTEKQPTTEQIEELMFAWKVVKHVKSNAIVVTKNRATVGIGAGQMNRVGAVKIALEQAGEKAIGGVLASDAFFPFDDSVKTAAAAGVTAIIQPGGSLKDKDSIAAANELGLIMILTGIRHFLH</sequence>
<accession>Q116T4</accession>
<dbReference type="EC" id="2.1.2.3" evidence="1"/>
<dbReference type="EC" id="3.5.4.10" evidence="1"/>
<dbReference type="EMBL" id="CP000393">
    <property type="protein sequence ID" value="ABG50490.1"/>
    <property type="molecule type" value="Genomic_DNA"/>
</dbReference>
<dbReference type="RefSeq" id="WP_011610876.1">
    <property type="nucleotide sequence ID" value="NC_008312.1"/>
</dbReference>
<dbReference type="SMR" id="Q116T4"/>
<dbReference type="STRING" id="203124.Tery_1128"/>
<dbReference type="KEGG" id="ter:Tery_1128"/>
<dbReference type="eggNOG" id="COG0138">
    <property type="taxonomic scope" value="Bacteria"/>
</dbReference>
<dbReference type="HOGENOM" id="CLU_016316_5_2_3"/>
<dbReference type="OrthoDB" id="9802065at2"/>
<dbReference type="UniPathway" id="UPA00074">
    <property type="reaction ID" value="UER00133"/>
</dbReference>
<dbReference type="UniPathway" id="UPA00074">
    <property type="reaction ID" value="UER00135"/>
</dbReference>
<dbReference type="GO" id="GO:0005829">
    <property type="term" value="C:cytosol"/>
    <property type="evidence" value="ECO:0007669"/>
    <property type="project" value="TreeGrafter"/>
</dbReference>
<dbReference type="GO" id="GO:0003937">
    <property type="term" value="F:IMP cyclohydrolase activity"/>
    <property type="evidence" value="ECO:0007669"/>
    <property type="project" value="UniProtKB-UniRule"/>
</dbReference>
<dbReference type="GO" id="GO:0004643">
    <property type="term" value="F:phosphoribosylaminoimidazolecarboxamide formyltransferase activity"/>
    <property type="evidence" value="ECO:0007669"/>
    <property type="project" value="UniProtKB-UniRule"/>
</dbReference>
<dbReference type="GO" id="GO:0006189">
    <property type="term" value="P:'de novo' IMP biosynthetic process"/>
    <property type="evidence" value="ECO:0007669"/>
    <property type="project" value="UniProtKB-UniRule"/>
</dbReference>
<dbReference type="CDD" id="cd01421">
    <property type="entry name" value="IMPCH"/>
    <property type="match status" value="1"/>
</dbReference>
<dbReference type="FunFam" id="3.40.140.20:FF:000001">
    <property type="entry name" value="Bifunctional purine biosynthesis protein PurH"/>
    <property type="match status" value="1"/>
</dbReference>
<dbReference type="FunFam" id="3.40.50.1380:FF:000001">
    <property type="entry name" value="Bifunctional purine biosynthesis protein PurH"/>
    <property type="match status" value="1"/>
</dbReference>
<dbReference type="Gene3D" id="3.40.140.20">
    <property type="match status" value="2"/>
</dbReference>
<dbReference type="Gene3D" id="3.40.50.1380">
    <property type="entry name" value="Methylglyoxal synthase-like domain"/>
    <property type="match status" value="1"/>
</dbReference>
<dbReference type="HAMAP" id="MF_00139">
    <property type="entry name" value="PurH"/>
    <property type="match status" value="1"/>
</dbReference>
<dbReference type="InterPro" id="IPR024051">
    <property type="entry name" value="AICAR_Tfase_dup_dom_sf"/>
</dbReference>
<dbReference type="InterPro" id="IPR016193">
    <property type="entry name" value="Cytidine_deaminase-like"/>
</dbReference>
<dbReference type="InterPro" id="IPR011607">
    <property type="entry name" value="MGS-like_dom"/>
</dbReference>
<dbReference type="InterPro" id="IPR036914">
    <property type="entry name" value="MGS-like_dom_sf"/>
</dbReference>
<dbReference type="InterPro" id="IPR002695">
    <property type="entry name" value="PurH-like"/>
</dbReference>
<dbReference type="NCBIfam" id="NF002049">
    <property type="entry name" value="PRK00881.1"/>
    <property type="match status" value="1"/>
</dbReference>
<dbReference type="NCBIfam" id="TIGR00355">
    <property type="entry name" value="purH"/>
    <property type="match status" value="1"/>
</dbReference>
<dbReference type="PANTHER" id="PTHR11692:SF0">
    <property type="entry name" value="BIFUNCTIONAL PURINE BIOSYNTHESIS PROTEIN ATIC"/>
    <property type="match status" value="1"/>
</dbReference>
<dbReference type="PANTHER" id="PTHR11692">
    <property type="entry name" value="BIFUNCTIONAL PURINE BIOSYNTHESIS PROTEIN PURH"/>
    <property type="match status" value="1"/>
</dbReference>
<dbReference type="Pfam" id="PF01808">
    <property type="entry name" value="AICARFT_IMPCHas"/>
    <property type="match status" value="1"/>
</dbReference>
<dbReference type="Pfam" id="PF02142">
    <property type="entry name" value="MGS"/>
    <property type="match status" value="1"/>
</dbReference>
<dbReference type="PIRSF" id="PIRSF000414">
    <property type="entry name" value="AICARFT_IMPCHas"/>
    <property type="match status" value="1"/>
</dbReference>
<dbReference type="SMART" id="SM00798">
    <property type="entry name" value="AICARFT_IMPCHas"/>
    <property type="match status" value="1"/>
</dbReference>
<dbReference type="SMART" id="SM00851">
    <property type="entry name" value="MGS"/>
    <property type="match status" value="1"/>
</dbReference>
<dbReference type="SUPFAM" id="SSF53927">
    <property type="entry name" value="Cytidine deaminase-like"/>
    <property type="match status" value="1"/>
</dbReference>
<dbReference type="SUPFAM" id="SSF52335">
    <property type="entry name" value="Methylglyoxal synthase-like"/>
    <property type="match status" value="1"/>
</dbReference>
<dbReference type="PROSITE" id="PS51855">
    <property type="entry name" value="MGS"/>
    <property type="match status" value="1"/>
</dbReference>
<keyword id="KW-0378">Hydrolase</keyword>
<keyword id="KW-0511">Multifunctional enzyme</keyword>
<keyword id="KW-0658">Purine biosynthesis</keyword>
<keyword id="KW-0808">Transferase</keyword>